<dbReference type="EMBL" id="AL591242">
    <property type="status" value="NOT_ANNOTATED_CDS"/>
    <property type="molecule type" value="Genomic_DNA"/>
</dbReference>
<dbReference type="EMBL" id="AK125838">
    <property type="protein sequence ID" value="BAG54254.1"/>
    <property type="molecule type" value="mRNA"/>
</dbReference>
<dbReference type="EMBL" id="AK131455">
    <property type="status" value="NOT_ANNOTATED_CDS"/>
    <property type="molecule type" value="mRNA"/>
</dbReference>
<dbReference type="EMBL" id="BX648686">
    <property type="protein sequence ID" value="CAI45997.1"/>
    <property type="status" value="ALT_INIT"/>
    <property type="molecule type" value="mRNA"/>
</dbReference>
<dbReference type="EMBL" id="AF039442">
    <property type="protein sequence ID" value="AAC18034.1"/>
    <property type="status" value="ALT_FRAME"/>
    <property type="molecule type" value="mRNA"/>
</dbReference>
<dbReference type="CCDS" id="CCDS34470.1">
    <molecule id="O60522-1"/>
</dbReference>
<dbReference type="CCDS" id="CCDS55017.1">
    <molecule id="O60522-2"/>
</dbReference>
<dbReference type="RefSeq" id="NP_001010870.1">
    <molecule id="O60522-1"/>
    <property type="nucleotide sequence ID" value="NM_001010870.3"/>
</dbReference>
<dbReference type="RefSeq" id="NP_001161831.1">
    <molecule id="O60522-2"/>
    <property type="nucleotide sequence ID" value="NM_001168359.2"/>
</dbReference>
<dbReference type="SMR" id="O60522"/>
<dbReference type="BioGRID" id="128720">
    <property type="interactions" value="8"/>
</dbReference>
<dbReference type="FunCoup" id="O60522">
    <property type="interactions" value="34"/>
</dbReference>
<dbReference type="IntAct" id="O60522">
    <property type="interactions" value="2"/>
</dbReference>
<dbReference type="STRING" id="9606.ENSP00000346065"/>
<dbReference type="iPTMnet" id="O60522"/>
<dbReference type="PhosphoSitePlus" id="O60522"/>
<dbReference type="SwissPalm" id="O60522"/>
<dbReference type="BioMuta" id="TDRD6"/>
<dbReference type="jPOST" id="O60522"/>
<dbReference type="MassIVE" id="O60522"/>
<dbReference type="PaxDb" id="9606-ENSP00000346065"/>
<dbReference type="PeptideAtlas" id="O60522"/>
<dbReference type="ProteomicsDB" id="26920"/>
<dbReference type="ProteomicsDB" id="49457">
    <molecule id="O60522-1"/>
</dbReference>
<dbReference type="Antibodypedia" id="48657">
    <property type="antibodies" value="14 antibodies from 9 providers"/>
</dbReference>
<dbReference type="DNASU" id="221400"/>
<dbReference type="Ensembl" id="ENST00000316081.11">
    <molecule id="O60522-1"/>
    <property type="protein sequence ID" value="ENSP00000346065.5"/>
    <property type="gene ID" value="ENSG00000180113.16"/>
</dbReference>
<dbReference type="Ensembl" id="ENST00000544460.5">
    <molecule id="O60522-2"/>
    <property type="protein sequence ID" value="ENSP00000443299.1"/>
    <property type="gene ID" value="ENSG00000180113.16"/>
</dbReference>
<dbReference type="GeneID" id="221400"/>
<dbReference type="KEGG" id="hsa:221400"/>
<dbReference type="MANE-Select" id="ENST00000316081.11">
    <property type="protein sequence ID" value="ENSP00000346065.5"/>
    <property type="RefSeq nucleotide sequence ID" value="NM_001010870.3"/>
    <property type="RefSeq protein sequence ID" value="NP_001010870.1"/>
</dbReference>
<dbReference type="UCSC" id="uc003oyj.4">
    <molecule id="O60522-1"/>
    <property type="organism name" value="human"/>
</dbReference>
<dbReference type="AGR" id="HGNC:21339"/>
<dbReference type="CTD" id="221400"/>
<dbReference type="DisGeNET" id="221400"/>
<dbReference type="GeneCards" id="TDRD6"/>
<dbReference type="HGNC" id="HGNC:21339">
    <property type="gene designation" value="TDRD6"/>
</dbReference>
<dbReference type="HPA" id="ENSG00000180113">
    <property type="expression patterns" value="Tissue enhanced (testis)"/>
</dbReference>
<dbReference type="MalaCards" id="TDRD6"/>
<dbReference type="MIM" id="611200">
    <property type="type" value="gene"/>
</dbReference>
<dbReference type="neXtProt" id="NX_O60522"/>
<dbReference type="OpenTargets" id="ENSG00000180113"/>
<dbReference type="PharmGKB" id="PA134945900"/>
<dbReference type="VEuPathDB" id="HostDB:ENSG00000180113"/>
<dbReference type="eggNOG" id="KOG2039">
    <property type="taxonomic scope" value="Eukaryota"/>
</dbReference>
<dbReference type="GeneTree" id="ENSGT00940000159049"/>
<dbReference type="HOGENOM" id="CLU_001126_1_0_1"/>
<dbReference type="InParanoid" id="O60522"/>
<dbReference type="OMA" id="PWLLTQM"/>
<dbReference type="OrthoDB" id="9989103at2759"/>
<dbReference type="PAN-GO" id="O60522">
    <property type="GO annotations" value="3 GO annotations based on evolutionary models"/>
</dbReference>
<dbReference type="PhylomeDB" id="O60522"/>
<dbReference type="PathwayCommons" id="O60522"/>
<dbReference type="Reactome" id="R-HSA-5601884">
    <property type="pathway name" value="PIWI-interacting RNA (piRNA) biogenesis"/>
</dbReference>
<dbReference type="SignaLink" id="O60522"/>
<dbReference type="BioGRID-ORCS" id="221400">
    <property type="hits" value="9 hits in 1143 CRISPR screens"/>
</dbReference>
<dbReference type="ChiTaRS" id="TDRD6">
    <property type="organism name" value="human"/>
</dbReference>
<dbReference type="GenomeRNAi" id="221400"/>
<dbReference type="Pharos" id="O60522">
    <property type="development level" value="Tdark"/>
</dbReference>
<dbReference type="PRO" id="PR:O60522"/>
<dbReference type="Proteomes" id="UP000005640">
    <property type="component" value="Chromosome 6"/>
</dbReference>
<dbReference type="RNAct" id="O60522">
    <property type="molecule type" value="protein"/>
</dbReference>
<dbReference type="Bgee" id="ENSG00000180113">
    <property type="expression patterns" value="Expressed in secondary oocyte and 133 other cell types or tissues"/>
</dbReference>
<dbReference type="ExpressionAtlas" id="O60522">
    <property type="expression patterns" value="baseline and differential"/>
</dbReference>
<dbReference type="GO" id="GO:0033391">
    <property type="term" value="C:chromatoid body"/>
    <property type="evidence" value="ECO:0000250"/>
    <property type="project" value="UniProtKB"/>
</dbReference>
<dbReference type="GO" id="GO:0005737">
    <property type="term" value="C:cytoplasm"/>
    <property type="evidence" value="ECO:0000250"/>
    <property type="project" value="UniProtKB"/>
</dbReference>
<dbReference type="GO" id="GO:0043186">
    <property type="term" value="C:P granule"/>
    <property type="evidence" value="ECO:0000318"/>
    <property type="project" value="GO_Central"/>
</dbReference>
<dbReference type="GO" id="GO:0030719">
    <property type="term" value="P:P granule organization"/>
    <property type="evidence" value="ECO:0000318"/>
    <property type="project" value="GO_Central"/>
</dbReference>
<dbReference type="GO" id="GO:0034587">
    <property type="term" value="P:piRNA processing"/>
    <property type="evidence" value="ECO:0000318"/>
    <property type="project" value="GO_Central"/>
</dbReference>
<dbReference type="GO" id="GO:0007283">
    <property type="term" value="P:spermatogenesis"/>
    <property type="evidence" value="ECO:0000250"/>
    <property type="project" value="UniProtKB"/>
</dbReference>
<dbReference type="CDD" id="cd20420">
    <property type="entry name" value="Tudor_TDRD6_rpt1"/>
    <property type="match status" value="1"/>
</dbReference>
<dbReference type="CDD" id="cd20421">
    <property type="entry name" value="Tudor_TDRD6_rpt2"/>
    <property type="match status" value="1"/>
</dbReference>
<dbReference type="CDD" id="cd20422">
    <property type="entry name" value="Tudor_TDRD6_rpt3"/>
    <property type="match status" value="1"/>
</dbReference>
<dbReference type="CDD" id="cd20423">
    <property type="entry name" value="Tudor_TDRD6_rpt4"/>
    <property type="match status" value="1"/>
</dbReference>
<dbReference type="CDD" id="cd20425">
    <property type="entry name" value="Tudor_TDRD6_rpt6"/>
    <property type="match status" value="1"/>
</dbReference>
<dbReference type="CDD" id="cd20426">
    <property type="entry name" value="Tudor_TDRD6_rpt7"/>
    <property type="match status" value="1"/>
</dbReference>
<dbReference type="FunFam" id="2.30.30.140:FF:000064">
    <property type="entry name" value="Tudor domain containing 6"/>
    <property type="match status" value="1"/>
</dbReference>
<dbReference type="FunFam" id="2.30.30.140:FF:000096">
    <property type="entry name" value="Tudor domain containing 6"/>
    <property type="match status" value="1"/>
</dbReference>
<dbReference type="FunFam" id="2.40.50.90:FF:000040">
    <property type="entry name" value="Tudor domain containing 6"/>
    <property type="match status" value="1"/>
</dbReference>
<dbReference type="FunFam" id="2.30.30.140:FF:000085">
    <property type="entry name" value="Tudor domain-containing protein 6"/>
    <property type="match status" value="1"/>
</dbReference>
<dbReference type="FunFam" id="2.30.30.140:FF:000090">
    <property type="entry name" value="Tudor domain-containing protein 6"/>
    <property type="match status" value="1"/>
</dbReference>
<dbReference type="Gene3D" id="2.30.30.140">
    <property type="match status" value="6"/>
</dbReference>
<dbReference type="Gene3D" id="2.40.50.90">
    <property type="match status" value="7"/>
</dbReference>
<dbReference type="InterPro" id="IPR035437">
    <property type="entry name" value="SNase_OB-fold_sf"/>
</dbReference>
<dbReference type="InterPro" id="IPR002999">
    <property type="entry name" value="Tudor"/>
</dbReference>
<dbReference type="InterPro" id="IPR050621">
    <property type="entry name" value="Tudor_domain_containing"/>
</dbReference>
<dbReference type="InterPro" id="IPR047444">
    <property type="entry name" value="Tudor_TDRD6_rpt1"/>
</dbReference>
<dbReference type="InterPro" id="IPR047445">
    <property type="entry name" value="Tudor_TDRD6_rpt2"/>
</dbReference>
<dbReference type="InterPro" id="IPR047447">
    <property type="entry name" value="Tudor_TDRD6_rpt3"/>
</dbReference>
<dbReference type="InterPro" id="IPR047446">
    <property type="entry name" value="Tudor_TDRD6_rpt4"/>
</dbReference>
<dbReference type="PANTHER" id="PTHR22948">
    <property type="entry name" value="TUDOR DOMAIN CONTAINING PROTEIN"/>
    <property type="match status" value="1"/>
</dbReference>
<dbReference type="PANTHER" id="PTHR22948:SF15">
    <property type="entry name" value="TUDOR DOMAIN-CONTAINING PROTEIN 6"/>
    <property type="match status" value="1"/>
</dbReference>
<dbReference type="Pfam" id="PF00567">
    <property type="entry name" value="TUDOR"/>
    <property type="match status" value="7"/>
</dbReference>
<dbReference type="SMART" id="SM00333">
    <property type="entry name" value="TUDOR"/>
    <property type="match status" value="8"/>
</dbReference>
<dbReference type="SUPFAM" id="SSF63748">
    <property type="entry name" value="Tudor/PWWP/MBT"/>
    <property type="match status" value="7"/>
</dbReference>
<dbReference type="PROSITE" id="PS50304">
    <property type="entry name" value="TUDOR"/>
    <property type="match status" value="6"/>
</dbReference>
<accession>O60522</accession>
<accession>B3KWU2</accession>
<accession>F5H5M3</accession>
<accession>Q5HYB1</accession>
<accession>Q5VTS4</accession>
<accession>Q6ZMX5</accession>
<keyword id="KW-0025">Alternative splicing</keyword>
<keyword id="KW-0963">Cytoplasm</keyword>
<keyword id="KW-0217">Developmental protein</keyword>
<keyword id="KW-0221">Differentiation</keyword>
<keyword id="KW-0597">Phosphoprotein</keyword>
<keyword id="KW-1267">Proteomics identification</keyword>
<keyword id="KW-1185">Reference proteome</keyword>
<keyword id="KW-0677">Repeat</keyword>
<keyword id="KW-0744">Spermatogenesis</keyword>
<name>TDRD6_HUMAN</name>
<reference key="1">
    <citation type="journal article" date="2003" name="Nature">
        <title>The DNA sequence and analysis of human chromosome 6.</title>
        <authorList>
            <person name="Mungall A.J."/>
            <person name="Palmer S.A."/>
            <person name="Sims S.K."/>
            <person name="Edwards C.A."/>
            <person name="Ashurst J.L."/>
            <person name="Wilming L."/>
            <person name="Jones M.C."/>
            <person name="Horton R."/>
            <person name="Hunt S.E."/>
            <person name="Scott C.E."/>
            <person name="Gilbert J.G.R."/>
            <person name="Clamp M.E."/>
            <person name="Bethel G."/>
            <person name="Milne S."/>
            <person name="Ainscough R."/>
            <person name="Almeida J.P."/>
            <person name="Ambrose K.D."/>
            <person name="Andrews T.D."/>
            <person name="Ashwell R.I.S."/>
            <person name="Babbage A.K."/>
            <person name="Bagguley C.L."/>
            <person name="Bailey J."/>
            <person name="Banerjee R."/>
            <person name="Barker D.J."/>
            <person name="Barlow K.F."/>
            <person name="Bates K."/>
            <person name="Beare D.M."/>
            <person name="Beasley H."/>
            <person name="Beasley O."/>
            <person name="Bird C.P."/>
            <person name="Blakey S.E."/>
            <person name="Bray-Allen S."/>
            <person name="Brook J."/>
            <person name="Brown A.J."/>
            <person name="Brown J.Y."/>
            <person name="Burford D.C."/>
            <person name="Burrill W."/>
            <person name="Burton J."/>
            <person name="Carder C."/>
            <person name="Carter N.P."/>
            <person name="Chapman J.C."/>
            <person name="Clark S.Y."/>
            <person name="Clark G."/>
            <person name="Clee C.M."/>
            <person name="Clegg S."/>
            <person name="Cobley V."/>
            <person name="Collier R.E."/>
            <person name="Collins J.E."/>
            <person name="Colman L.K."/>
            <person name="Corby N.R."/>
            <person name="Coville G.J."/>
            <person name="Culley K.M."/>
            <person name="Dhami P."/>
            <person name="Davies J."/>
            <person name="Dunn M."/>
            <person name="Earthrowl M.E."/>
            <person name="Ellington A.E."/>
            <person name="Evans K.A."/>
            <person name="Faulkner L."/>
            <person name="Francis M.D."/>
            <person name="Frankish A."/>
            <person name="Frankland J."/>
            <person name="French L."/>
            <person name="Garner P."/>
            <person name="Garnett J."/>
            <person name="Ghori M.J."/>
            <person name="Gilby L.M."/>
            <person name="Gillson C.J."/>
            <person name="Glithero R.J."/>
            <person name="Grafham D.V."/>
            <person name="Grant M."/>
            <person name="Gribble S."/>
            <person name="Griffiths C."/>
            <person name="Griffiths M.N.D."/>
            <person name="Hall R."/>
            <person name="Halls K.S."/>
            <person name="Hammond S."/>
            <person name="Harley J.L."/>
            <person name="Hart E.A."/>
            <person name="Heath P.D."/>
            <person name="Heathcott R."/>
            <person name="Holmes S.J."/>
            <person name="Howden P.J."/>
            <person name="Howe K.L."/>
            <person name="Howell G.R."/>
            <person name="Huckle E."/>
            <person name="Humphray S.J."/>
            <person name="Humphries M.D."/>
            <person name="Hunt A.R."/>
            <person name="Johnson C.M."/>
            <person name="Joy A.A."/>
            <person name="Kay M."/>
            <person name="Keenan S.J."/>
            <person name="Kimberley A.M."/>
            <person name="King A."/>
            <person name="Laird G.K."/>
            <person name="Langford C."/>
            <person name="Lawlor S."/>
            <person name="Leongamornlert D.A."/>
            <person name="Leversha M."/>
            <person name="Lloyd C.R."/>
            <person name="Lloyd D.M."/>
            <person name="Loveland J.E."/>
            <person name="Lovell J."/>
            <person name="Martin S."/>
            <person name="Mashreghi-Mohammadi M."/>
            <person name="Maslen G.L."/>
            <person name="Matthews L."/>
            <person name="McCann O.T."/>
            <person name="McLaren S.J."/>
            <person name="McLay K."/>
            <person name="McMurray A."/>
            <person name="Moore M.J.F."/>
            <person name="Mullikin J.C."/>
            <person name="Niblett D."/>
            <person name="Nickerson T."/>
            <person name="Novik K.L."/>
            <person name="Oliver K."/>
            <person name="Overton-Larty E.K."/>
            <person name="Parker A."/>
            <person name="Patel R."/>
            <person name="Pearce A.V."/>
            <person name="Peck A.I."/>
            <person name="Phillimore B.J.C.T."/>
            <person name="Phillips S."/>
            <person name="Plumb R.W."/>
            <person name="Porter K.M."/>
            <person name="Ramsey Y."/>
            <person name="Ranby S.A."/>
            <person name="Rice C.M."/>
            <person name="Ross M.T."/>
            <person name="Searle S.M."/>
            <person name="Sehra H.K."/>
            <person name="Sheridan E."/>
            <person name="Skuce C.D."/>
            <person name="Smith S."/>
            <person name="Smith M."/>
            <person name="Spraggon L."/>
            <person name="Squares S.L."/>
            <person name="Steward C.A."/>
            <person name="Sycamore N."/>
            <person name="Tamlyn-Hall G."/>
            <person name="Tester J."/>
            <person name="Theaker A.J."/>
            <person name="Thomas D.W."/>
            <person name="Thorpe A."/>
            <person name="Tracey A."/>
            <person name="Tromans A."/>
            <person name="Tubby B."/>
            <person name="Wall M."/>
            <person name="Wallis J.M."/>
            <person name="West A.P."/>
            <person name="White S.S."/>
            <person name="Whitehead S.L."/>
            <person name="Whittaker H."/>
            <person name="Wild A."/>
            <person name="Willey D.J."/>
            <person name="Wilmer T.E."/>
            <person name="Wood J.M."/>
            <person name="Wray P.W."/>
            <person name="Wyatt J.C."/>
            <person name="Young L."/>
            <person name="Younger R.M."/>
            <person name="Bentley D.R."/>
            <person name="Coulson A."/>
            <person name="Durbin R.M."/>
            <person name="Hubbard T."/>
            <person name="Sulston J.E."/>
            <person name="Dunham I."/>
            <person name="Rogers J."/>
            <person name="Beck S."/>
        </authorList>
    </citation>
    <scope>NUCLEOTIDE SEQUENCE [LARGE SCALE GENOMIC DNA]</scope>
</reference>
<reference key="2">
    <citation type="journal article" date="2004" name="Nat. Genet.">
        <title>Complete sequencing and characterization of 21,243 full-length human cDNAs.</title>
        <authorList>
            <person name="Ota T."/>
            <person name="Suzuki Y."/>
            <person name="Nishikawa T."/>
            <person name="Otsuki T."/>
            <person name="Sugiyama T."/>
            <person name="Irie R."/>
            <person name="Wakamatsu A."/>
            <person name="Hayashi K."/>
            <person name="Sato H."/>
            <person name="Nagai K."/>
            <person name="Kimura K."/>
            <person name="Makita H."/>
            <person name="Sekine M."/>
            <person name="Obayashi M."/>
            <person name="Nishi T."/>
            <person name="Shibahara T."/>
            <person name="Tanaka T."/>
            <person name="Ishii S."/>
            <person name="Yamamoto J."/>
            <person name="Saito K."/>
            <person name="Kawai Y."/>
            <person name="Isono Y."/>
            <person name="Nakamura Y."/>
            <person name="Nagahari K."/>
            <person name="Murakami K."/>
            <person name="Yasuda T."/>
            <person name="Iwayanagi T."/>
            <person name="Wagatsuma M."/>
            <person name="Shiratori A."/>
            <person name="Sudo H."/>
            <person name="Hosoiri T."/>
            <person name="Kaku Y."/>
            <person name="Kodaira H."/>
            <person name="Kondo H."/>
            <person name="Sugawara M."/>
            <person name="Takahashi M."/>
            <person name="Kanda K."/>
            <person name="Yokoi T."/>
            <person name="Furuya T."/>
            <person name="Kikkawa E."/>
            <person name="Omura Y."/>
            <person name="Abe K."/>
            <person name="Kamihara K."/>
            <person name="Katsuta N."/>
            <person name="Sato K."/>
            <person name="Tanikawa M."/>
            <person name="Yamazaki M."/>
            <person name="Ninomiya K."/>
            <person name="Ishibashi T."/>
            <person name="Yamashita H."/>
            <person name="Murakawa K."/>
            <person name="Fujimori K."/>
            <person name="Tanai H."/>
            <person name="Kimata M."/>
            <person name="Watanabe M."/>
            <person name="Hiraoka S."/>
            <person name="Chiba Y."/>
            <person name="Ishida S."/>
            <person name="Ono Y."/>
            <person name="Takiguchi S."/>
            <person name="Watanabe S."/>
            <person name="Yosida M."/>
            <person name="Hotuta T."/>
            <person name="Kusano J."/>
            <person name="Kanehori K."/>
            <person name="Takahashi-Fujii A."/>
            <person name="Hara H."/>
            <person name="Tanase T.-O."/>
            <person name="Nomura Y."/>
            <person name="Togiya S."/>
            <person name="Komai F."/>
            <person name="Hara R."/>
            <person name="Takeuchi K."/>
            <person name="Arita M."/>
            <person name="Imose N."/>
            <person name="Musashino K."/>
            <person name="Yuuki H."/>
            <person name="Oshima A."/>
            <person name="Sasaki N."/>
            <person name="Aotsuka S."/>
            <person name="Yoshikawa Y."/>
            <person name="Matsunawa H."/>
            <person name="Ichihara T."/>
            <person name="Shiohata N."/>
            <person name="Sano S."/>
            <person name="Moriya S."/>
            <person name="Momiyama H."/>
            <person name="Satoh N."/>
            <person name="Takami S."/>
            <person name="Terashima Y."/>
            <person name="Suzuki O."/>
            <person name="Nakagawa S."/>
            <person name="Senoh A."/>
            <person name="Mizoguchi H."/>
            <person name="Goto Y."/>
            <person name="Shimizu F."/>
            <person name="Wakebe H."/>
            <person name="Hishigaki H."/>
            <person name="Watanabe T."/>
            <person name="Sugiyama A."/>
            <person name="Takemoto M."/>
            <person name="Kawakami B."/>
            <person name="Yamazaki M."/>
            <person name="Watanabe K."/>
            <person name="Kumagai A."/>
            <person name="Itakura S."/>
            <person name="Fukuzumi Y."/>
            <person name="Fujimori Y."/>
            <person name="Komiyama M."/>
            <person name="Tashiro H."/>
            <person name="Tanigami A."/>
            <person name="Fujiwara T."/>
            <person name="Ono T."/>
            <person name="Yamada K."/>
            <person name="Fujii Y."/>
            <person name="Ozaki K."/>
            <person name="Hirao M."/>
            <person name="Ohmori Y."/>
            <person name="Kawabata A."/>
            <person name="Hikiji T."/>
            <person name="Kobatake N."/>
            <person name="Inagaki H."/>
            <person name="Ikema Y."/>
            <person name="Okamoto S."/>
            <person name="Okitani R."/>
            <person name="Kawakami T."/>
            <person name="Noguchi S."/>
            <person name="Itoh T."/>
            <person name="Shigeta K."/>
            <person name="Senba T."/>
            <person name="Matsumura K."/>
            <person name="Nakajima Y."/>
            <person name="Mizuno T."/>
            <person name="Morinaga M."/>
            <person name="Sasaki M."/>
            <person name="Togashi T."/>
            <person name="Oyama M."/>
            <person name="Hata H."/>
            <person name="Watanabe M."/>
            <person name="Komatsu T."/>
            <person name="Mizushima-Sugano J."/>
            <person name="Satoh T."/>
            <person name="Shirai Y."/>
            <person name="Takahashi Y."/>
            <person name="Nakagawa K."/>
            <person name="Okumura K."/>
            <person name="Nagase T."/>
            <person name="Nomura N."/>
            <person name="Kikuchi H."/>
            <person name="Masuho Y."/>
            <person name="Yamashita R."/>
            <person name="Nakai K."/>
            <person name="Yada T."/>
            <person name="Nakamura Y."/>
            <person name="Ohara O."/>
            <person name="Isogai T."/>
            <person name="Sugano S."/>
        </authorList>
    </citation>
    <scope>NUCLEOTIDE SEQUENCE [LARGE SCALE MRNA] OF 1-1161 (ISOFORM 1)</scope>
    <scope>NUCLEOTIDE SEQUENCE [LARGE SCALE MRNA] OF 887-2066 (ISOFORM 2)</scope>
    <scope>VARIANT GLU-1014</scope>
    <source>
        <tissue>Testis</tissue>
    </source>
</reference>
<reference key="3">
    <citation type="journal article" date="2007" name="BMC Genomics">
        <title>The full-ORF clone resource of the German cDNA consortium.</title>
        <authorList>
            <person name="Bechtel S."/>
            <person name="Rosenfelder H."/>
            <person name="Duda A."/>
            <person name="Schmidt C.P."/>
            <person name="Ernst U."/>
            <person name="Wellenreuther R."/>
            <person name="Mehrle A."/>
            <person name="Schuster C."/>
            <person name="Bahr A."/>
            <person name="Bloecker H."/>
            <person name="Heubner D."/>
            <person name="Hoerlein A."/>
            <person name="Michel G."/>
            <person name="Wedler H."/>
            <person name="Koehrer K."/>
            <person name="Ottenwaelder B."/>
            <person name="Poustka A."/>
            <person name="Wiemann S."/>
            <person name="Schupp I."/>
        </authorList>
    </citation>
    <scope>NUCLEOTIDE SEQUENCE [LARGE SCALE MRNA] OF 1073-2096 (ISOFORM 1)</scope>
    <source>
        <tissue>Testis</tissue>
    </source>
</reference>
<reference key="4">
    <citation type="journal article" date="1998" name="Int. J. Cancer">
        <title>Characterization of human colon cancer antigens recognized by autologous antibodies.</title>
        <authorList>
            <person name="Scanlan M.J."/>
            <person name="Chen Y.-T."/>
            <person name="Williamson B."/>
            <person name="Gure A.O."/>
            <person name="Stockert E."/>
            <person name="Gordan J.D."/>
            <person name="Tuereci O."/>
            <person name="Sahin U."/>
            <person name="Pfreundschuh M."/>
            <person name="Old L.J."/>
        </authorList>
    </citation>
    <scope>NUCLEOTIDE SEQUENCE [MRNA] OF 1271-2096 (ISOFORM 1)</scope>
    <source>
        <tissue>Colon tumor</tissue>
    </source>
</reference>
<comment type="function">
    <text evidence="1 2">Tudor domain-containing protein involved in germ cell development, more specifically the formation of chromatoid body (during spermiogenesis), Balbiani body (during oogenesis), germ plasm (upon fertilization), and for proper miRNA expression and spliceosome maturation (By similarity). Essential for RNA-dependent helicase UPF1 localization to chromatoid body, for UPF1-UPF2 and UPF1-DDX4 interactions which are required for mRNA degradation, using the extended 3' UTR-triggered nonsense-mediated mRNA decay (NMD) pathway. Involved in spliceosome maturation and mRNA splicing in prophase I spermatocytes through interaction with arginine N-methyltransferase PRMT5 and symmetrically arginine dimethylated SNRPB (small nuclear ribonucleoprotein-associated protein) (By similarity).</text>
</comment>
<comment type="subunit">
    <text evidence="2">Found in a mRNP complex (i.e. messenger ribonucleoproteins which correspond to mRNA with bound proteins), at least composed of TDRD1, TDRD6, TDRD7 and DDX4. Found in a complex, at least composed of PIWIL1, PIWIL2, DDX4 and TDRD6. Interacts with Tex19.1 and probably Tex19.2. Interacts with PRMT5. Interacts with SNRPB (when methylated); to trigger spliceosome formation.</text>
</comment>
<comment type="subcellular location">
    <subcellularLocation>
        <location evidence="2">Cytoplasm</location>
    </subcellularLocation>
    <text evidence="2">Present in chromatoid body (CB) of spermatids, also named processing bodies (P-bodies) in somatic cells. Detected in the multilobular cytoplasmic CBs (also called intermitochondrial cementin) in pachytene spermatocytes and as a single perinuclear CB in haploid round spermatids. Colocalizes in CB with DDX4, PIWIL1, PIWIL2, TDRD1 and TDRD7.</text>
</comment>
<comment type="alternative products">
    <event type="alternative splicing"/>
    <isoform>
        <id>O60522-1</id>
        <name>1</name>
        <sequence type="displayed"/>
    </isoform>
    <isoform>
        <id>O60522-2</id>
        <name>2</name>
        <sequence type="described" ref="VSP_044801"/>
    </isoform>
</comment>
<comment type="domain">
    <text evidence="2">The tudor domains recognize and bind to proteins with dimethylated arginine residues.</text>
</comment>
<comment type="PTM">
    <text evidence="2">Undergoes proteolytic cleavage near the C-terminal by an unknown protease during the transition from meiosis I to meiosis II in primary spermatocytes.</text>
</comment>
<comment type="sequence caution" evidence="7">
    <conflict type="frameshift">
        <sequence resource="EMBL-CDS" id="AAC18034"/>
    </conflict>
</comment>
<comment type="sequence caution" evidence="7">
    <conflict type="erroneous initiation">
        <sequence resource="EMBL-CDS" id="CAI45997"/>
    </conflict>
    <text>Truncated N-terminus.</text>
</comment>
<gene>
    <name evidence="8" type="primary">TDRD6</name>
</gene>
<evidence type="ECO:0000250" key="1">
    <source>
        <dbReference type="UniProtKB" id="F1R237"/>
    </source>
</evidence>
<evidence type="ECO:0000250" key="2">
    <source>
        <dbReference type="UniProtKB" id="P61407"/>
    </source>
</evidence>
<evidence type="ECO:0000255" key="3">
    <source>
        <dbReference type="PROSITE-ProRule" id="PRU00211"/>
    </source>
</evidence>
<evidence type="ECO:0000256" key="4">
    <source>
        <dbReference type="SAM" id="MobiDB-lite"/>
    </source>
</evidence>
<evidence type="ECO:0000269" key="5">
    <source>
    </source>
</evidence>
<evidence type="ECO:0000303" key="6">
    <source>
    </source>
</evidence>
<evidence type="ECO:0000305" key="7"/>
<evidence type="ECO:0000312" key="8">
    <source>
        <dbReference type="HGNC" id="HGNC:21339"/>
    </source>
</evidence>
<protein>
    <recommendedName>
        <fullName>Tudor domain-containing protein 6</fullName>
    </recommendedName>
    <alternativeName>
        <fullName>Antigen NY-CO-45</fullName>
    </alternativeName>
    <alternativeName>
        <fullName>Cancer/testis antigen 41.2</fullName>
        <shortName>CT41.2</shortName>
    </alternativeName>
</protein>
<sequence length="2096" mass="236517">MCSTPGMPAPGASLALRVSFVDVHPDVIPVQLWGLVGERRGEYLRLSREIQEAAATRGQWALGSASASPGELCLVQVGLLWHRCRVVSRQAQESRVFLLDEGRTITAGAGSLAPGRREFFNLPSEVLGCVLAGLVPAGCGAGSGEPPQHWPADAVDFLSNLQGKEVHGCVLDVLLLHRLVLLEVPDVFQQMRELGLARRVPDSLFRSLLERYLTAATASVGSGVPVLSRVPLKQKQPGLDYFYPQLQLGVTEAVVITQVCHPHRIHCQLRSVSQEIHRLSESMAQVYRGSTGTGDENSTSATWEEREESPDKPGSPCASCGLDGHWYRALLLETFRPQRCAQVLHVDYGRKELVSCSSLRYLLPEYFRMPVVTYPCALYGLWDGGRGWSRSQVGDLKTLILGKAVNAKIEFYCSFEHVYYVSLYGEDGINLNRVFGVQSCCLADRVLQSQATEEEEPETSQSQSPAEEVDEEISLPALRSIRLKMNAFYDAQVEFVKNPSEFWIRLRKHNVTFSKLMRRMCGFYSSASKLDGVVLKPEPDDLCCVKWKENGYYRAIVTKLDDKSVDVFLVDRGNSENVDWYDVRMLLPQFRQLPILAVKCTLADIWPLGKTWSQEAVSFFKKTVLHKELVIHILDKQDHQYVIEILDESRTGEENISKVIAQAGYAKYQEFETKENILVNAHSPGHVSNHFTTESNKIPFAKTGEGEQKAKRENKTTSVSKALSDTTVVTNGSTELVVQEKVKRASVYFPLMQNCLEIKPGSSSKGELEVGSTVEVRVSYVENPGYFWCQLTRNIQGLKTLMSDIQYYCKNTAAPHQRNTLACLAKRTVNRQWSRALISGIQSVEHVNVTFVDYGDREMVSVKNIYSISEEFLKVKAQAFRCSLYNLIQPVGQNPFVWDVKAIQAFNEFIDNAWQKNLELKCTIFALASINEELFNIVDLLTPFQSACHFLVEKRLARPVKLQKPLESSVQLHSYFYSTHDMKIGSEELVYITHIDDPWTFYCQLARNANILEQLSCSITQLSKVLLNLKTSPLNPGTLCLAKYTDGNWYRGIVIEKEPKKVFFVDFGNIYVVTSDDLLPIPSDAYDVLLLPMQAVRCSLSDIPDHIPEEVVVWFQETILDKSLKALVVAKDPDGTLIIELYGDNIQISASINKKLGLLSYKDRIRKKESEVLCSTTETLEEKNENMKLPCTEYLSKSVGYKLPNKEILEESYKPQINSSYKELKLLQSLTKTNLVTQYQDSVGNKNSQVFPLTTEKKEEISAETPLKTARVEATLSERKIGDSCDKDLPLKFCEFPQKTIMPGFKTTVYVSHINDLSDFYVQLIEDEAEISHLSERLNSVKTRPEYYVGPPLQRGDMICAVFPEDNLWYRAVIKEQQPNDLLSVQFIDYGNVSVVHTNKIGRLDLVNAILPGLCIHCSLQGFEVPDNKNSKKMMHYFSQRTSEAAIRCEFVKFQDRWEVILADEHGIIADDMISRYALSEKSQVELSTQVIKSASSKSVNKSDIDTSVFLNWYNPEKKMIRAYATVIDGPEYFWCQFADTEKLQCLEVEVQTAGEQVADRRNCIPCPYIGDPCIVRYREDGHYYRALITNICEDYLVSVRLVDFGNIEDCVDPKALWAIPSELLSVPMQAFPCCLSGFNISEGLCSQEGNDYFYEIITEDVLEITILEIRRDVCDIPLAIVDLKSKGKSINEKMEKYSKTGIKSALPYENIDSEIKQTLGSYNLDVGLKKLSNKAVQNKIYMEQQTDELAEITEKDVNIIGTKPSNFRDPKTDNICEGFENPCKDKIDTEELEGELECHLVDKAEFDDKYLITGFNTLLPHANETKEILELNSLEVPLSPDDESKEFLELESIELQNSLVVDEEKGELSPVPPNVPLSQECVTKGAMELFTLQLPLSCEAEKQPELELPTAQLPLDDKMDPLSLGVSQKAQESMCTEDMRKSSCVESFDDQRRMSLHLHGADCDPKTQNEMNICEEEFVEYKNRDAISALMPLFSEEESSDGSKHNNGLPDHISAQLQNTYTLKAFTVGSKCVVWSSLRNTWSKCEILETAEEGTRVLNLSNGMEEIVNPENVWNGIPKLDKSPPEKRGLEVMEI</sequence>
<proteinExistence type="evidence at protein level"/>
<organism>
    <name type="scientific">Homo sapiens</name>
    <name type="common">Human</name>
    <dbReference type="NCBI Taxonomy" id="9606"/>
    <lineage>
        <taxon>Eukaryota</taxon>
        <taxon>Metazoa</taxon>
        <taxon>Chordata</taxon>
        <taxon>Craniata</taxon>
        <taxon>Vertebrata</taxon>
        <taxon>Euteleostomi</taxon>
        <taxon>Mammalia</taxon>
        <taxon>Eutheria</taxon>
        <taxon>Euarchontoglires</taxon>
        <taxon>Primates</taxon>
        <taxon>Haplorrhini</taxon>
        <taxon>Catarrhini</taxon>
        <taxon>Hominidae</taxon>
        <taxon>Homo</taxon>
    </lineage>
</organism>
<feature type="chain" id="PRO_0000183167" description="Tudor domain-containing protein 6">
    <location>
        <begin position="1"/>
        <end position="2096"/>
    </location>
</feature>
<feature type="domain" description="Tudor 1" evidence="3">
    <location>
        <begin position="65"/>
        <end position="120"/>
    </location>
</feature>
<feature type="domain" description="Tudor 2" evidence="3">
    <location>
        <begin position="310"/>
        <end position="369"/>
    </location>
</feature>
<feature type="domain" description="Tudor 3" evidence="3">
    <location>
        <begin position="536"/>
        <end position="593"/>
    </location>
</feature>
<feature type="domain" description="Tudor 4" evidence="3">
    <location>
        <begin position="816"/>
        <end position="875"/>
    </location>
</feature>
<feature type="domain" description="Tudor 5" evidence="3">
    <location>
        <begin position="1033"/>
        <end position="1088"/>
    </location>
</feature>
<feature type="domain" description="Tudor 6" evidence="3">
    <location>
        <begin position="1352"/>
        <end position="1411"/>
    </location>
</feature>
<feature type="domain" description="Tudor 7" evidence="3">
    <location>
        <begin position="1567"/>
        <end position="1626"/>
    </location>
</feature>
<feature type="domain" description="Tudor 8" evidence="3">
    <location>
        <begin position="2026"/>
        <end position="2084"/>
    </location>
</feature>
<feature type="region of interest" description="Disordered" evidence="4">
    <location>
        <begin position="287"/>
        <end position="316"/>
    </location>
</feature>
<feature type="compositionally biased region" description="Polar residues" evidence="4">
    <location>
        <begin position="288"/>
        <end position="302"/>
    </location>
</feature>
<feature type="modified residue" description="Phosphothreonine" evidence="2">
    <location>
        <position position="293"/>
    </location>
</feature>
<feature type="modified residue" description="Phosphoserine" evidence="2">
    <location>
        <position position="1722"/>
    </location>
</feature>
<feature type="modified residue" description="Phosphoserine" evidence="2">
    <location>
        <position position="2062"/>
    </location>
</feature>
<feature type="splice variant" id="VSP_044801" description="In isoform 2." evidence="6">
    <location>
        <begin position="2058"/>
        <end position="2087"/>
    </location>
</feature>
<feature type="sequence variant" id="VAR_029050" description="In dbSNP:rs7750596.">
    <original>R</original>
    <variation>Q</variation>
    <location>
        <position position="192"/>
    </location>
</feature>
<feature type="sequence variant" id="VAR_029051" description="In dbSNP:rs3799277.">
    <original>T</original>
    <variation>A</variation>
    <location>
        <position position="398"/>
    </location>
</feature>
<feature type="sequence variant" id="VAR_052423" description="In dbSNP:rs9463234.">
    <original>I</original>
    <variation>M</variation>
    <location>
        <position position="795"/>
    </location>
</feature>
<feature type="sequence variant" id="VAR_029052" description="In dbSNP:rs9381472." evidence="5">
    <original>Q</original>
    <variation>E</variation>
    <location>
        <position position="1014"/>
    </location>
</feature>
<feature type="sequence conflict" description="In Ref. 4; AAC18034." evidence="7" ref="4">
    <original>E</original>
    <variation>K</variation>
    <location>
        <position position="1273"/>
    </location>
</feature>
<feature type="sequence conflict" description="In Ref. 3; CAI45997." evidence="7" ref="3">
    <original>Q</original>
    <variation>R</variation>
    <location>
        <position position="1455"/>
    </location>
</feature>
<feature type="sequence conflict" description="In Ref. 3; CAI45997." evidence="7" ref="3">
    <original>M</original>
    <variation>V</variation>
    <location>
        <position position="1955"/>
    </location>
</feature>
<feature type="sequence conflict" description="In Ref. 4; AAC18034." evidence="7" ref="4">
    <original>A</original>
    <variation>D</variation>
    <location>
        <position position="2016"/>
    </location>
</feature>